<evidence type="ECO:0000255" key="1">
    <source>
        <dbReference type="HAMAP-Rule" id="MF_04082"/>
    </source>
</evidence>
<sequence length="86" mass="9985">MDIVQQVGLLVVLIIELVIVIVIWVKVYKLCKEDRRQKKIDRLIARIRERAEDSGNESDGDTEELQDLITEGDNLMHIGIRDNRNN</sequence>
<comment type="function">
    <text evidence="1">Enhances virion budding by targeting host CD4 and Tetherin/BST2 to proteasome degradation. Degradation of CD4 prevents any unwanted premature interactions between viral Env and its host receptor CD4 in the endoplasmic reticulum. Degradation of antiretroviral protein Tetherin/BST2 is important for virion budding, as BST2 tethers new viral particles to the host cell membrane. Mechanistically, Vpu bridges either CD4 or BST2 to BTRC, a substrate recognition subunit of the Skp1/Cullin/F-box protein E3 ubiquitin ligase, induces their ubiquitination and subsequent proteasomal degradation. The alteration of the E3 ligase specificity by Vpu seems to promote the degradation of host IKBKB, leading to NF-kappa-B down-regulation and subsequent apoptosis. Acts as a viroporin that forms an oligomeric ion channel in membranes. Modulates the host DNA repair mechanisms to promote degradation of nuclear viral cDNA in cells that are already productively infected in order to suppress immune sensing and proviral hyper-integration (superinfection). Manipulates PML-NBs and modulates SUMOylation of host BLM protein thereby enhancing its DNA-end processing activity toward viral unintegrated linear DNA. Also inhibits RAD52-mediated homologous repair of viral cDNA, preventing the generation of dead-end circular forms of single copies of the long terminal repeat and permitting sustained nucleolytic attack.</text>
</comment>
<comment type="activity regulation">
    <text evidence="1">Ion channel activity is inhibited by hexamethylene amiloride in vitro.</text>
</comment>
<comment type="subunit">
    <text evidence="1">Homopentamer. Interacts with host CD4 and BRTC; these interactions induce proteasomal degradation of CD4. Interacts with host BST2; this interaction leads to the degradation of host BST2. Interacts with host FBXW11. Interacts with host AP1M1; this interaction plays a role in the mistrafficking and subsequent degradation of host BST2. Interacts with host RANBP2; this interaction allows Vpu to down-regulate host BLM sumoylation. Forms pentamers or hexamers. Interacts with host CD4 and BRTC; these interactions induce proteasomal degradation of CD4. Interacts with host BST2; this interaction leads to the degradation of host BST2. Interacts with host FBXW11. Interacts with host AP1M1; this interaction plays a role in the mistrafficking and subsequent degradation of host BST2.</text>
</comment>
<comment type="subcellular location">
    <subcellularLocation>
        <location evidence="1">Host membrane</location>
        <topology evidence="1">Single-pass type I membrane protein</topology>
    </subcellularLocation>
</comment>
<comment type="domain">
    <text evidence="1">The N-terminus and transmembrane domains are required for self-oligomerization and proper virion budding, whereas the cytoplasmic domain is required for CD4 degradation. The cytoplasmic domain is composed of 2 amphipathic alpha helix that form a U-shape.</text>
</comment>
<comment type="PTM">
    <text evidence="1">Phosphorylated by host CK2. This phosphorylation is necessary for interaction with human BTRC and degradation of CD4.</text>
</comment>
<comment type="miscellaneous">
    <text evidence="1">HIV-1 lineages are divided in three main groups, M (for Major), O (for Outlier), and N (for New, or Non-M, Non-O). The vast majority of strains found worldwide belong to the group M. Group O seems to be endemic to and largely confined to Cameroon and neighboring countries in West Central Africa, where these viruses represent a small minority of HIV-1 strains. The group N is represented by a limited number of isolates from Cameroonian persons. The group M is further subdivided in 9 clades or subtypes (A to D, F to H, J and K).</text>
</comment>
<comment type="similarity">
    <text evidence="1">Belongs to the HIV-1 VPU protein family.</text>
</comment>
<feature type="chain" id="PRO_0000248295" description="Protein Vpu">
    <location>
        <begin position="1"/>
        <end position="86"/>
    </location>
</feature>
<feature type="topological domain" description="Extracellular" evidence="1">
    <location>
        <begin position="1"/>
        <end position="8"/>
    </location>
</feature>
<feature type="transmembrane region" description="Helical" evidence="1">
    <location>
        <begin position="9"/>
        <end position="29"/>
    </location>
</feature>
<feature type="topological domain" description="Cytoplasmic" evidence="1">
    <location>
        <begin position="30"/>
        <end position="86"/>
    </location>
</feature>
<feature type="modified residue" description="Phosphoserine; by host CK2" evidence="1">
    <location>
        <position position="54"/>
    </location>
</feature>
<feature type="modified residue" description="Phosphoserine; by host CK2" evidence="1">
    <location>
        <position position="58"/>
    </location>
</feature>
<name>VPU_SIVMB</name>
<keyword id="KW-0014">AIDS</keyword>
<keyword id="KW-0053">Apoptosis</keyword>
<keyword id="KW-1043">Host membrane</keyword>
<keyword id="KW-0945">Host-virus interaction</keyword>
<keyword id="KW-1090">Inhibition of host innate immune response by virus</keyword>
<keyword id="KW-1084">Inhibition of host tetherin by virus</keyword>
<keyword id="KW-0407">Ion channel</keyword>
<keyword id="KW-0406">Ion transport</keyword>
<keyword id="KW-0472">Membrane</keyword>
<keyword id="KW-0597">Phosphoprotein</keyword>
<keyword id="KW-1185">Reference proteome</keyword>
<keyword id="KW-0812">Transmembrane</keyword>
<keyword id="KW-1133">Transmembrane helix</keyword>
<keyword id="KW-0813">Transport</keyword>
<keyword id="KW-0899">Viral immunoevasion</keyword>
<accession>Q1A262</accession>
<organismHost>
    <name type="scientific">Pan troglodytes</name>
    <name type="common">Chimpanzee</name>
    <dbReference type="NCBI Taxonomy" id="9598"/>
</organismHost>
<organism>
    <name type="scientific">Simian immunodeficiency virus (isolate MB66)</name>
    <name type="common">SIV-cpz</name>
    <name type="synonym">Chimpanzee immunodeficiency virus</name>
    <dbReference type="NCBI Taxonomy" id="388911"/>
    <lineage>
        <taxon>Viruses</taxon>
        <taxon>Riboviria</taxon>
        <taxon>Pararnavirae</taxon>
        <taxon>Artverviricota</taxon>
        <taxon>Revtraviricetes</taxon>
        <taxon>Ortervirales</taxon>
        <taxon>Retroviridae</taxon>
        <taxon>Orthoretrovirinae</taxon>
        <taxon>Lentivirus</taxon>
        <taxon>Simian immunodeficiency virus</taxon>
    </lineage>
</organism>
<dbReference type="EMBL" id="DQ373063">
    <property type="protein sequence ID" value="ABD19480.1"/>
    <property type="molecule type" value="Genomic_RNA"/>
</dbReference>
<dbReference type="Proteomes" id="UP000009152">
    <property type="component" value="Segment"/>
</dbReference>
<dbReference type="GO" id="GO:0033644">
    <property type="term" value="C:host cell membrane"/>
    <property type="evidence" value="ECO:0007669"/>
    <property type="project" value="UniProtKB-SubCell"/>
</dbReference>
<dbReference type="GO" id="GO:0016020">
    <property type="term" value="C:membrane"/>
    <property type="evidence" value="ECO:0007669"/>
    <property type="project" value="UniProtKB-UniRule"/>
</dbReference>
<dbReference type="GO" id="GO:0042609">
    <property type="term" value="F:CD4 receptor binding"/>
    <property type="evidence" value="ECO:0007669"/>
    <property type="project" value="UniProtKB-UniRule"/>
</dbReference>
<dbReference type="GO" id="GO:0005261">
    <property type="term" value="F:monoatomic cation channel activity"/>
    <property type="evidence" value="ECO:0007669"/>
    <property type="project" value="UniProtKB-UniRule"/>
</dbReference>
<dbReference type="GO" id="GO:0032801">
    <property type="term" value="P:receptor catabolic process"/>
    <property type="evidence" value="ECO:0007669"/>
    <property type="project" value="UniProtKB-UniRule"/>
</dbReference>
<dbReference type="GO" id="GO:0052170">
    <property type="term" value="P:symbiont-mediated suppression of host innate immune response"/>
    <property type="evidence" value="ECO:0007669"/>
    <property type="project" value="UniProtKB-KW"/>
</dbReference>
<dbReference type="GO" id="GO:0039502">
    <property type="term" value="P:symbiont-mediated suppression of host type I interferon-mediated signaling pathway"/>
    <property type="evidence" value="ECO:0007669"/>
    <property type="project" value="UniProtKB-UniRule"/>
</dbReference>
<dbReference type="GO" id="GO:0039587">
    <property type="term" value="P:symbiont-mediated-mediated suppression of host tetherin activity"/>
    <property type="evidence" value="ECO:0007669"/>
    <property type="project" value="UniProtKB-UniRule"/>
</dbReference>
<dbReference type="GO" id="GO:0019076">
    <property type="term" value="P:viral release from host cell"/>
    <property type="evidence" value="ECO:0007669"/>
    <property type="project" value="UniProtKB-UniRule"/>
</dbReference>
<dbReference type="Gene3D" id="1.10.195.10">
    <property type="entry name" value="HIV-1 VPU cytoplasmic domain"/>
    <property type="match status" value="1"/>
</dbReference>
<dbReference type="HAMAP" id="MF_04082">
    <property type="entry name" value="HIV_VPU"/>
    <property type="match status" value="1"/>
</dbReference>
<dbReference type="InterPro" id="IPR008187">
    <property type="entry name" value="Vpu"/>
</dbReference>
<dbReference type="InterPro" id="IPR009032">
    <property type="entry name" value="Vpu_cyt_dom_sf"/>
</dbReference>
<dbReference type="Pfam" id="PF00558">
    <property type="entry name" value="Vpu"/>
    <property type="match status" value="1"/>
</dbReference>
<dbReference type="SUPFAM" id="SSF57647">
    <property type="entry name" value="HIV-1 VPU cytoplasmic domain"/>
    <property type="match status" value="1"/>
</dbReference>
<gene>
    <name evidence="1" type="primary">vpu</name>
</gene>
<protein>
    <recommendedName>
        <fullName evidence="1">Protein Vpu</fullName>
    </recommendedName>
    <alternativeName>
        <fullName evidence="1">U ORF protein</fullName>
    </alternativeName>
    <alternativeName>
        <fullName evidence="1">Viral protein U</fullName>
    </alternativeName>
</protein>
<proteinExistence type="inferred from homology"/>
<reference key="1">
    <citation type="journal article" date="2006" name="Science">
        <title>Chimpanzee reservoirs of pandemic and nonpandemic HIV-1.</title>
        <authorList>
            <person name="Keele B.F."/>
            <person name="Van Heuverswyn F."/>
            <person name="Li Y."/>
            <person name="Bailes E."/>
            <person name="Takehisa J."/>
            <person name="Santiago M.L."/>
            <person name="Bibollet-Ruche F."/>
            <person name="Chen Y."/>
            <person name="Wain L.V."/>
            <person name="Liegeois F."/>
            <person name="Loul S."/>
            <person name="Ngole E.M."/>
            <person name="Bienvenue Y."/>
            <person name="Delaporte E."/>
            <person name="Brookfield J.F."/>
            <person name="Sharp P.M."/>
            <person name="Shaw G.M."/>
            <person name="Peeters M."/>
            <person name="Hahn B.H."/>
        </authorList>
    </citation>
    <scope>NUCLEOTIDE SEQUENCE [GENOMIC RNA]</scope>
</reference>